<organism>
    <name type="scientific">Xenopus tropicalis</name>
    <name type="common">Western clawed frog</name>
    <name type="synonym">Silurana tropicalis</name>
    <dbReference type="NCBI Taxonomy" id="8364"/>
    <lineage>
        <taxon>Eukaryota</taxon>
        <taxon>Metazoa</taxon>
        <taxon>Chordata</taxon>
        <taxon>Craniata</taxon>
        <taxon>Vertebrata</taxon>
        <taxon>Euteleostomi</taxon>
        <taxon>Amphibia</taxon>
        <taxon>Batrachia</taxon>
        <taxon>Anura</taxon>
        <taxon>Pipoidea</taxon>
        <taxon>Pipidae</taxon>
        <taxon>Xenopodinae</taxon>
        <taxon>Xenopus</taxon>
        <taxon>Silurana</taxon>
    </lineage>
</organism>
<name>RWDD3_XENTR</name>
<reference key="1">
    <citation type="submission" date="2006-10" db="EMBL/GenBank/DDBJ databases">
        <authorList>
            <consortium name="Sanger Xenopus tropicalis EST/cDNA project"/>
        </authorList>
    </citation>
    <scope>NUCLEOTIDE SEQUENCE [LARGE SCALE MRNA]</scope>
    <source>
        <tissue>Egg</tissue>
    </source>
</reference>
<reference key="2">
    <citation type="submission" date="2007-12" db="EMBL/GenBank/DDBJ databases">
        <authorList>
            <consortium name="NIH - Xenopus Gene Collection (XGC) project"/>
        </authorList>
    </citation>
    <scope>NUCLEOTIDE SEQUENCE [LARGE SCALE MRNA]</scope>
    <source>
        <strain>N6</strain>
        <tissue>Ovary</tissue>
    </source>
</reference>
<proteinExistence type="evidence at transcript level"/>
<dbReference type="EMBL" id="CR855762">
    <property type="protein sequence ID" value="CAJ81611.1"/>
    <property type="molecule type" value="mRNA"/>
</dbReference>
<dbReference type="EMBL" id="BC157252">
    <property type="protein sequence ID" value="AAI57253.1"/>
    <property type="molecule type" value="mRNA"/>
</dbReference>
<dbReference type="RefSeq" id="NP_001017275.1">
    <property type="nucleotide sequence ID" value="NM_001017275.2"/>
</dbReference>
<dbReference type="SMR" id="A9ULH0"/>
<dbReference type="FunCoup" id="A9ULH0">
    <property type="interactions" value="238"/>
</dbReference>
<dbReference type="PaxDb" id="8364-ENSXETP00000054859"/>
<dbReference type="GeneID" id="550029"/>
<dbReference type="KEGG" id="xtr:550029"/>
<dbReference type="AGR" id="Xenbase:XB-GENE-960546"/>
<dbReference type="CTD" id="25950"/>
<dbReference type="Xenbase" id="XB-GENE-960546">
    <property type="gene designation" value="rwdd3"/>
</dbReference>
<dbReference type="eggNOG" id="ENOG502QSYH">
    <property type="taxonomic scope" value="Eukaryota"/>
</dbReference>
<dbReference type="HOGENOM" id="CLU_087636_0_0_1"/>
<dbReference type="InParanoid" id="A9ULH0"/>
<dbReference type="OMA" id="GITFRIQ"/>
<dbReference type="OrthoDB" id="167315at2759"/>
<dbReference type="PhylomeDB" id="A9ULH0"/>
<dbReference type="TreeFam" id="TF324344"/>
<dbReference type="Proteomes" id="UP000008143">
    <property type="component" value="Chromosome 4"/>
</dbReference>
<dbReference type="GO" id="GO:0005737">
    <property type="term" value="C:cytoplasm"/>
    <property type="evidence" value="ECO:0007669"/>
    <property type="project" value="UniProtKB-SubCell"/>
</dbReference>
<dbReference type="GO" id="GO:0005634">
    <property type="term" value="C:nucleus"/>
    <property type="evidence" value="ECO:0007669"/>
    <property type="project" value="UniProtKB-SubCell"/>
</dbReference>
<dbReference type="GO" id="GO:1902073">
    <property type="term" value="P:positive regulation of hypoxia-inducible factor-1alpha signaling pathway"/>
    <property type="evidence" value="ECO:0007669"/>
    <property type="project" value="InterPro"/>
</dbReference>
<dbReference type="GO" id="GO:0033235">
    <property type="term" value="P:positive regulation of protein sumoylation"/>
    <property type="evidence" value="ECO:0007669"/>
    <property type="project" value="InterPro"/>
</dbReference>
<dbReference type="CDD" id="cd23819">
    <property type="entry name" value="RWD_RWDD3"/>
    <property type="match status" value="1"/>
</dbReference>
<dbReference type="CDD" id="cd24164">
    <property type="entry name" value="RWDD3_C"/>
    <property type="match status" value="1"/>
</dbReference>
<dbReference type="FunFam" id="3.10.110.10:FF:000050">
    <property type="entry name" value="eIF-2-alpha kinase GCN2"/>
    <property type="match status" value="1"/>
</dbReference>
<dbReference type="Gene3D" id="3.10.110.10">
    <property type="entry name" value="Ubiquitin Conjugating Enzyme"/>
    <property type="match status" value="1"/>
</dbReference>
<dbReference type="InterPro" id="IPR006575">
    <property type="entry name" value="RWD_dom"/>
</dbReference>
<dbReference type="InterPro" id="IPR038840">
    <property type="entry name" value="RWDD3"/>
</dbReference>
<dbReference type="InterPro" id="IPR016135">
    <property type="entry name" value="UBQ-conjugating_enzyme/RWD"/>
</dbReference>
<dbReference type="PANTHER" id="PTHR15628">
    <property type="entry name" value="RWD DOMAIN-CONTAINING PROTEIN 3"/>
    <property type="match status" value="1"/>
</dbReference>
<dbReference type="PANTHER" id="PTHR15628:SF1">
    <property type="entry name" value="RWD DOMAIN-CONTAINING PROTEIN 3"/>
    <property type="match status" value="1"/>
</dbReference>
<dbReference type="Pfam" id="PF05773">
    <property type="entry name" value="RWD"/>
    <property type="match status" value="1"/>
</dbReference>
<dbReference type="SMART" id="SM00591">
    <property type="entry name" value="RWD"/>
    <property type="match status" value="1"/>
</dbReference>
<dbReference type="SUPFAM" id="SSF54495">
    <property type="entry name" value="UBC-like"/>
    <property type="match status" value="1"/>
</dbReference>
<dbReference type="PROSITE" id="PS50908">
    <property type="entry name" value="RWD"/>
    <property type="match status" value="1"/>
</dbReference>
<gene>
    <name type="primary">rwdd3</name>
    <name type="ORF">TGas086h03.1</name>
</gene>
<evidence type="ECO:0000250" key="1"/>
<evidence type="ECO:0000255" key="2">
    <source>
        <dbReference type="PROSITE-ProRule" id="PRU00179"/>
    </source>
</evidence>
<evidence type="ECO:0000305" key="3"/>
<accession>A9ULH0</accession>
<accession>Q28D15</accession>
<keyword id="KW-0963">Cytoplasm</keyword>
<keyword id="KW-0539">Nucleus</keyword>
<keyword id="KW-1185">Reference proteome</keyword>
<comment type="function">
    <text evidence="1">Enhancer of SUMO conjugation. Increases SUMO conjugation to proteins by promoting the: binding of E1 and E2 enzymes, thioester linkage between SUMO and ube2i/ubc9 and transfer of SUMO to specific target proteins which include hif1a, pias, nfkbia, nr3c1 and top1. Has no effect on ubiquitination (By similarity).</text>
</comment>
<comment type="subcellular location">
    <subcellularLocation>
        <location>Nucleus</location>
    </subcellularLocation>
    <subcellularLocation>
        <location>Cytoplasm</location>
    </subcellularLocation>
    <text evidence="1">Colocalizes with ubc9/ube2i in nuclear spots.</text>
</comment>
<comment type="domain">
    <text evidence="1">The RWD domain is required for the sumoylation enhancement activity.</text>
</comment>
<sequence length="265" mass="30038">MSESALEEVAALSAIYCRDGECEVLSSSVNGITVMIQTGVQGITGSEIHLKLIFDLPVEYPSSLPNISVSSEELTRAQRKDLRDKLVEQAKQHILEPMIHDLVVWTQQNLNNLIVQPEPSILEGHFPLSLDTITEETTWTILLRLDHMRAKSKYVKTVEKWTNDLKLCGRLMFLGKLILILLQGDRKSTRDYLVLQKTCKVDVDSSGKKCKEKMISVLCETILPLKQKRFTTFEVKEYSSVSDLQKEFEAAGLQTIFSEFVQALF</sequence>
<feature type="chain" id="PRO_0000339465" description="RWD domain-containing protein 3">
    <location>
        <begin position="1"/>
        <end position="265"/>
    </location>
</feature>
<feature type="domain" description="RWD" evidence="2">
    <location>
        <begin position="7"/>
        <end position="114"/>
    </location>
</feature>
<feature type="sequence conflict" description="In Ref. 2; AAI57253." evidence="3" ref="2">
    <original>D</original>
    <variation>V</variation>
    <location>
        <position position="19"/>
    </location>
</feature>
<protein>
    <recommendedName>
        <fullName>RWD domain-containing protein 3</fullName>
    </recommendedName>
</protein>